<gene>
    <name evidence="1" type="primary">rplA</name>
    <name type="ordered locus">TM_0455</name>
</gene>
<reference key="1">
    <citation type="journal article" date="1992" name="J. Biol. Chem.">
        <title>The organization and expression of essential transcription translation component genes in the extremely thermophilic eubacterium Thermotoga maritima.</title>
        <authorList>
            <person name="Liao D."/>
            <person name="Dennis P.P."/>
        </authorList>
    </citation>
    <scope>NUCLEOTIDE SEQUENCE [GENOMIC DNA]</scope>
    <source>
        <strain>ATCC 43589 / DSM 3109 / JCM 10099 / NBRC 100826 / MSB8</strain>
    </source>
</reference>
<reference key="2">
    <citation type="journal article" date="1999" name="Nature">
        <title>Evidence for lateral gene transfer between Archaea and Bacteria from genome sequence of Thermotoga maritima.</title>
        <authorList>
            <person name="Nelson K.E."/>
            <person name="Clayton R.A."/>
            <person name="Gill S.R."/>
            <person name="Gwinn M.L."/>
            <person name="Dodson R.J."/>
            <person name="Haft D.H."/>
            <person name="Hickey E.K."/>
            <person name="Peterson J.D."/>
            <person name="Nelson W.C."/>
            <person name="Ketchum K.A."/>
            <person name="McDonald L.A."/>
            <person name="Utterback T.R."/>
            <person name="Malek J.A."/>
            <person name="Linher K.D."/>
            <person name="Garrett M.M."/>
            <person name="Stewart A.M."/>
            <person name="Cotton M.D."/>
            <person name="Pratt M.S."/>
            <person name="Phillips C.A."/>
            <person name="Richardson D.L."/>
            <person name="Heidelberg J.F."/>
            <person name="Sutton G.G."/>
            <person name="Fleischmann R.D."/>
            <person name="Eisen J.A."/>
            <person name="White O."/>
            <person name="Salzberg S.L."/>
            <person name="Smith H.O."/>
            <person name="Venter J.C."/>
            <person name="Fraser C.M."/>
        </authorList>
    </citation>
    <scope>NUCLEOTIDE SEQUENCE [LARGE SCALE GENOMIC DNA]</scope>
    <source>
        <strain>ATCC 43589 / DSM 3109 / JCM 10099 / NBRC 100826 / MSB8</strain>
    </source>
</reference>
<evidence type="ECO:0000255" key="1">
    <source>
        <dbReference type="HAMAP-Rule" id="MF_01318"/>
    </source>
</evidence>
<evidence type="ECO:0000305" key="2"/>
<feature type="chain" id="PRO_0000125762" description="Large ribosomal subunit protein uL1">
    <location>
        <begin position="1"/>
        <end position="233"/>
    </location>
</feature>
<accession>P29393</accession>
<name>RL1_THEMA</name>
<sequence length="233" mass="25932">MPKHSKRYLEARKLVDRTKYYDLDEAIELVKKTATAKFDETIELHIQTGIDYRKPEQHIRGTIVLPHGTGKEVKVLVFAKGEKAKEALEAGADYVGAEDLVEKIEKEGFLDFDVAIATPDMMRIIGRLGKILGPRGLMPSPKSGTVTQEVAEAVKEFKKGRIEVRTDKTGNIHIPVGKRSFDNEKLKENIIAAIKQIMQMKPAGVKGQFIKKVVLASTMGPGIKLNLQSLLKE</sequence>
<keyword id="KW-1185">Reference proteome</keyword>
<keyword id="KW-0678">Repressor</keyword>
<keyword id="KW-0687">Ribonucleoprotein</keyword>
<keyword id="KW-0689">Ribosomal protein</keyword>
<keyword id="KW-0694">RNA-binding</keyword>
<keyword id="KW-0699">rRNA-binding</keyword>
<keyword id="KW-0810">Translation regulation</keyword>
<keyword id="KW-0820">tRNA-binding</keyword>
<protein>
    <recommendedName>
        <fullName evidence="1">Large ribosomal subunit protein uL1</fullName>
    </recommendedName>
    <alternativeName>
        <fullName evidence="2">50S ribosomal protein L1</fullName>
    </alternativeName>
</protein>
<proteinExistence type="inferred from homology"/>
<organism>
    <name type="scientific">Thermotoga maritima (strain ATCC 43589 / DSM 3109 / JCM 10099 / NBRC 100826 / MSB8)</name>
    <dbReference type="NCBI Taxonomy" id="243274"/>
    <lineage>
        <taxon>Bacteria</taxon>
        <taxon>Thermotogati</taxon>
        <taxon>Thermotogota</taxon>
        <taxon>Thermotogae</taxon>
        <taxon>Thermotogales</taxon>
        <taxon>Thermotogaceae</taxon>
        <taxon>Thermotoga</taxon>
    </lineage>
</organism>
<dbReference type="EMBL" id="Z11839">
    <property type="protein sequence ID" value="CAA77860.1"/>
    <property type="molecule type" value="Genomic_DNA"/>
</dbReference>
<dbReference type="EMBL" id="AE000512">
    <property type="protein sequence ID" value="AAD35538.1"/>
    <property type="molecule type" value="Genomic_DNA"/>
</dbReference>
<dbReference type="PIR" id="C44466">
    <property type="entry name" value="R5HG1T"/>
</dbReference>
<dbReference type="RefSeq" id="NP_228265.1">
    <property type="nucleotide sequence ID" value="NC_000853.1"/>
</dbReference>
<dbReference type="RefSeq" id="WP_004081511.1">
    <property type="nucleotide sequence ID" value="NZ_CP011107.1"/>
</dbReference>
<dbReference type="SMR" id="P29393"/>
<dbReference type="FunCoup" id="P29393">
    <property type="interactions" value="445"/>
</dbReference>
<dbReference type="STRING" id="243274.TM_0455"/>
<dbReference type="PaxDb" id="243274-THEMA_02415"/>
<dbReference type="EnsemblBacteria" id="AAD35538">
    <property type="protein sequence ID" value="AAD35538"/>
    <property type="gene ID" value="TM_0455"/>
</dbReference>
<dbReference type="KEGG" id="tma:TM0455"/>
<dbReference type="KEGG" id="tmi:THEMA_02415"/>
<dbReference type="KEGG" id="tmm:Tmari_0452"/>
<dbReference type="KEGG" id="tmw:THMA_0465"/>
<dbReference type="eggNOG" id="COG0081">
    <property type="taxonomic scope" value="Bacteria"/>
</dbReference>
<dbReference type="InParanoid" id="P29393"/>
<dbReference type="OrthoDB" id="9803740at2"/>
<dbReference type="Proteomes" id="UP000008183">
    <property type="component" value="Chromosome"/>
</dbReference>
<dbReference type="GO" id="GO:0015934">
    <property type="term" value="C:large ribosomal subunit"/>
    <property type="evidence" value="ECO:0007669"/>
    <property type="project" value="InterPro"/>
</dbReference>
<dbReference type="GO" id="GO:0019843">
    <property type="term" value="F:rRNA binding"/>
    <property type="evidence" value="ECO:0007669"/>
    <property type="project" value="UniProtKB-UniRule"/>
</dbReference>
<dbReference type="GO" id="GO:0003735">
    <property type="term" value="F:structural constituent of ribosome"/>
    <property type="evidence" value="ECO:0007669"/>
    <property type="project" value="InterPro"/>
</dbReference>
<dbReference type="GO" id="GO:0000049">
    <property type="term" value="F:tRNA binding"/>
    <property type="evidence" value="ECO:0007669"/>
    <property type="project" value="UniProtKB-KW"/>
</dbReference>
<dbReference type="GO" id="GO:0006417">
    <property type="term" value="P:regulation of translation"/>
    <property type="evidence" value="ECO:0007669"/>
    <property type="project" value="UniProtKB-KW"/>
</dbReference>
<dbReference type="GO" id="GO:0006412">
    <property type="term" value="P:translation"/>
    <property type="evidence" value="ECO:0007669"/>
    <property type="project" value="UniProtKB-UniRule"/>
</dbReference>
<dbReference type="CDD" id="cd00403">
    <property type="entry name" value="Ribosomal_L1"/>
    <property type="match status" value="1"/>
</dbReference>
<dbReference type="FunFam" id="3.40.50.790:FF:000001">
    <property type="entry name" value="50S ribosomal protein L1"/>
    <property type="match status" value="1"/>
</dbReference>
<dbReference type="Gene3D" id="3.30.190.20">
    <property type="match status" value="1"/>
</dbReference>
<dbReference type="Gene3D" id="3.40.50.790">
    <property type="match status" value="1"/>
</dbReference>
<dbReference type="HAMAP" id="MF_01318_B">
    <property type="entry name" value="Ribosomal_uL1_B"/>
    <property type="match status" value="1"/>
</dbReference>
<dbReference type="InterPro" id="IPR005878">
    <property type="entry name" value="Ribosom_uL1_bac-type"/>
</dbReference>
<dbReference type="InterPro" id="IPR002143">
    <property type="entry name" value="Ribosomal_uL1"/>
</dbReference>
<dbReference type="InterPro" id="IPR023674">
    <property type="entry name" value="Ribosomal_uL1-like"/>
</dbReference>
<dbReference type="InterPro" id="IPR028364">
    <property type="entry name" value="Ribosomal_uL1/biogenesis"/>
</dbReference>
<dbReference type="InterPro" id="IPR016095">
    <property type="entry name" value="Ribosomal_uL1_3-a/b-sand"/>
</dbReference>
<dbReference type="InterPro" id="IPR023673">
    <property type="entry name" value="Ribosomal_uL1_CS"/>
</dbReference>
<dbReference type="NCBIfam" id="TIGR01169">
    <property type="entry name" value="rplA_bact"/>
    <property type="match status" value="1"/>
</dbReference>
<dbReference type="PANTHER" id="PTHR36427">
    <property type="entry name" value="54S RIBOSOMAL PROTEIN L1, MITOCHONDRIAL"/>
    <property type="match status" value="1"/>
</dbReference>
<dbReference type="PANTHER" id="PTHR36427:SF3">
    <property type="entry name" value="LARGE RIBOSOMAL SUBUNIT PROTEIN UL1M"/>
    <property type="match status" value="1"/>
</dbReference>
<dbReference type="Pfam" id="PF00687">
    <property type="entry name" value="Ribosomal_L1"/>
    <property type="match status" value="1"/>
</dbReference>
<dbReference type="PIRSF" id="PIRSF002155">
    <property type="entry name" value="Ribosomal_L1"/>
    <property type="match status" value="1"/>
</dbReference>
<dbReference type="SUPFAM" id="SSF56808">
    <property type="entry name" value="Ribosomal protein L1"/>
    <property type="match status" value="1"/>
</dbReference>
<dbReference type="PROSITE" id="PS01199">
    <property type="entry name" value="RIBOSOMAL_L1"/>
    <property type="match status" value="1"/>
</dbReference>
<comment type="function">
    <text evidence="1">Binds directly to 23S rRNA. The L1 stalk is quite mobile in the ribosome, and is involved in E site tRNA release.</text>
</comment>
<comment type="function">
    <text evidence="1">Protein L1 is also a translational repressor protein, it controls the translation of the L11 operon by binding to its mRNA.</text>
</comment>
<comment type="subunit">
    <text evidence="1">Part of the 50S ribosomal subunit.</text>
</comment>
<comment type="similarity">
    <text evidence="1">Belongs to the universal ribosomal protein uL1 family.</text>
</comment>